<sequence>MSREKYYITTAIAYPNGKPHIGHAYELIATDAMARFQRLNGMDVYFLTGTDEHGIKMLQSARKEGITPRELADRNTSAFRRMAEVLNSSNDDYIRTSEERHYKASQVIWQAMVANGDIYKGGYAGWYSVRDEAYYGEEETEVRADGVRYGPQGTPVEWVEEESYFFRLSAYQDKLLDLYENNPGFIMPAERRNEIVSFVKSGLKDLSISRTTFDWGIPVPGDEKHVMYVWVDALTNYITALGYPDTTDERWAYWPANAHIIGKDISRFHAVYWPAFLMSAQLPLPKRVFAHGFLFNRGEKMSKSVGNVIDPFELVERYGLDQLRYFLMREVPFGQDGSYSHEAIVNRTNADLANDLGNLAQRSLSMIAKNCEGKVPQPGAFSEADKAILDQADAALETARKAMDDQALHLALGAIFAVVAEANRYFAGQEPWALRKTDPARMGTVLYVTAEVLRRVGIMVQPFIPQSAEKLLDILAAPADKRQFADVLASPLAGGTDLPAPQPVFPRYVEADEQN</sequence>
<protein>
    <recommendedName>
        <fullName evidence="1">Methionine--tRNA ligase</fullName>
        <ecNumber evidence="1">6.1.1.10</ecNumber>
    </recommendedName>
    <alternativeName>
        <fullName evidence="1">Methionyl-tRNA synthetase</fullName>
        <shortName evidence="1">MetRS</shortName>
    </alternativeName>
</protein>
<reference key="1">
    <citation type="journal article" date="2002" name="Proc. Natl. Acad. Sci. U.S.A.">
        <title>The genome sequence of the facultative intracellular pathogen Brucella melitensis.</title>
        <authorList>
            <person name="DelVecchio V.G."/>
            <person name="Kapatral V."/>
            <person name="Redkar R.J."/>
            <person name="Patra G."/>
            <person name="Mujer C."/>
            <person name="Los T."/>
            <person name="Ivanova N."/>
            <person name="Anderson I."/>
            <person name="Bhattacharyya A."/>
            <person name="Lykidis A."/>
            <person name="Reznik G."/>
            <person name="Jablonski L."/>
            <person name="Larsen N."/>
            <person name="D'Souza M."/>
            <person name="Bernal A."/>
            <person name="Mazur M."/>
            <person name="Goltsman E."/>
            <person name="Selkov E."/>
            <person name="Elzer P.H."/>
            <person name="Hagius S."/>
            <person name="O'Callaghan D."/>
            <person name="Letesson J.-J."/>
            <person name="Haselkorn R."/>
            <person name="Kyrpides N.C."/>
            <person name="Overbeek R."/>
        </authorList>
    </citation>
    <scope>NUCLEOTIDE SEQUENCE [LARGE SCALE GENOMIC DNA]</scope>
    <source>
        <strain>ATCC 23456 / CCUG 17765 / NCTC 10094 / 16M</strain>
    </source>
</reference>
<keyword id="KW-0030">Aminoacyl-tRNA synthetase</keyword>
<keyword id="KW-0067">ATP-binding</keyword>
<keyword id="KW-0963">Cytoplasm</keyword>
<keyword id="KW-0436">Ligase</keyword>
<keyword id="KW-0547">Nucleotide-binding</keyword>
<keyword id="KW-0648">Protein biosynthesis</keyword>
<name>SYM_BRUME</name>
<proteinExistence type="inferred from homology"/>
<dbReference type="EC" id="6.1.1.10" evidence="1"/>
<dbReference type="EMBL" id="AE008917">
    <property type="protein sequence ID" value="AAL52168.1"/>
    <property type="status" value="ALT_INIT"/>
    <property type="molecule type" value="Genomic_DNA"/>
</dbReference>
<dbReference type="PIR" id="AE3375">
    <property type="entry name" value="AE3375"/>
</dbReference>
<dbReference type="RefSeq" id="WP_004683748.1">
    <property type="nucleotide sequence ID" value="NZ_GG703778.1"/>
</dbReference>
<dbReference type="SMR" id="Q8YH17"/>
<dbReference type="GeneID" id="29593805"/>
<dbReference type="KEGG" id="bme:BMEI0987"/>
<dbReference type="KEGG" id="bmel:DK63_434"/>
<dbReference type="PATRIC" id="fig|224914.52.peg.452"/>
<dbReference type="eggNOG" id="COG0143">
    <property type="taxonomic scope" value="Bacteria"/>
</dbReference>
<dbReference type="PhylomeDB" id="Q8YH17"/>
<dbReference type="Proteomes" id="UP000000419">
    <property type="component" value="Chromosome I"/>
</dbReference>
<dbReference type="GO" id="GO:0005737">
    <property type="term" value="C:cytoplasm"/>
    <property type="evidence" value="ECO:0007669"/>
    <property type="project" value="UniProtKB-SubCell"/>
</dbReference>
<dbReference type="GO" id="GO:0005524">
    <property type="term" value="F:ATP binding"/>
    <property type="evidence" value="ECO:0007669"/>
    <property type="project" value="UniProtKB-UniRule"/>
</dbReference>
<dbReference type="GO" id="GO:0004825">
    <property type="term" value="F:methionine-tRNA ligase activity"/>
    <property type="evidence" value="ECO:0007669"/>
    <property type="project" value="UniProtKB-UniRule"/>
</dbReference>
<dbReference type="GO" id="GO:0006431">
    <property type="term" value="P:methionyl-tRNA aminoacylation"/>
    <property type="evidence" value="ECO:0007669"/>
    <property type="project" value="UniProtKB-UniRule"/>
</dbReference>
<dbReference type="CDD" id="cd07957">
    <property type="entry name" value="Anticodon_Ia_Met"/>
    <property type="match status" value="1"/>
</dbReference>
<dbReference type="CDD" id="cd00814">
    <property type="entry name" value="MetRS_core"/>
    <property type="match status" value="1"/>
</dbReference>
<dbReference type="FunFam" id="2.170.220.10:FF:000001">
    <property type="entry name" value="methionine--tRNA ligase, mitochondrial"/>
    <property type="match status" value="1"/>
</dbReference>
<dbReference type="Gene3D" id="2.170.220.10">
    <property type="match status" value="1"/>
</dbReference>
<dbReference type="Gene3D" id="3.40.50.620">
    <property type="entry name" value="HUPs"/>
    <property type="match status" value="1"/>
</dbReference>
<dbReference type="Gene3D" id="1.10.730.10">
    <property type="entry name" value="Isoleucyl-tRNA Synthetase, Domain 1"/>
    <property type="match status" value="1"/>
</dbReference>
<dbReference type="HAMAP" id="MF_01228">
    <property type="entry name" value="Met_tRNA_synth_type2"/>
    <property type="match status" value="1"/>
</dbReference>
<dbReference type="InterPro" id="IPR001412">
    <property type="entry name" value="aa-tRNA-synth_I_CS"/>
</dbReference>
<dbReference type="InterPro" id="IPR041872">
    <property type="entry name" value="Anticodon_Met"/>
</dbReference>
<dbReference type="InterPro" id="IPR014758">
    <property type="entry name" value="Met-tRNA_synth"/>
</dbReference>
<dbReference type="InterPro" id="IPR023457">
    <property type="entry name" value="Met-tRNA_synth_2"/>
</dbReference>
<dbReference type="InterPro" id="IPR015413">
    <property type="entry name" value="Methionyl/Leucyl_tRNA_Synth"/>
</dbReference>
<dbReference type="InterPro" id="IPR033911">
    <property type="entry name" value="MetRS_core"/>
</dbReference>
<dbReference type="InterPro" id="IPR014729">
    <property type="entry name" value="Rossmann-like_a/b/a_fold"/>
</dbReference>
<dbReference type="InterPro" id="IPR009080">
    <property type="entry name" value="tRNAsynth_Ia_anticodon-bd"/>
</dbReference>
<dbReference type="NCBIfam" id="TIGR00398">
    <property type="entry name" value="metG"/>
    <property type="match status" value="1"/>
</dbReference>
<dbReference type="NCBIfam" id="NF008900">
    <property type="entry name" value="PRK12267.1"/>
    <property type="match status" value="1"/>
</dbReference>
<dbReference type="PANTHER" id="PTHR43326:SF1">
    <property type="entry name" value="METHIONINE--TRNA LIGASE, MITOCHONDRIAL"/>
    <property type="match status" value="1"/>
</dbReference>
<dbReference type="PANTHER" id="PTHR43326">
    <property type="entry name" value="METHIONYL-TRNA SYNTHETASE"/>
    <property type="match status" value="1"/>
</dbReference>
<dbReference type="Pfam" id="PF19303">
    <property type="entry name" value="Anticodon_3"/>
    <property type="match status" value="1"/>
</dbReference>
<dbReference type="Pfam" id="PF09334">
    <property type="entry name" value="tRNA-synt_1g"/>
    <property type="match status" value="1"/>
</dbReference>
<dbReference type="PRINTS" id="PR01041">
    <property type="entry name" value="TRNASYNTHMET"/>
</dbReference>
<dbReference type="SUPFAM" id="SSF47323">
    <property type="entry name" value="Anticodon-binding domain of a subclass of class I aminoacyl-tRNA synthetases"/>
    <property type="match status" value="1"/>
</dbReference>
<dbReference type="SUPFAM" id="SSF52374">
    <property type="entry name" value="Nucleotidylyl transferase"/>
    <property type="match status" value="1"/>
</dbReference>
<dbReference type="PROSITE" id="PS00178">
    <property type="entry name" value="AA_TRNA_LIGASE_I"/>
    <property type="match status" value="1"/>
</dbReference>
<comment type="function">
    <text evidence="1">Is required not only for elongation of protein synthesis but also for the initiation of all mRNA translation through initiator tRNA(fMet) aminoacylation.</text>
</comment>
<comment type="catalytic activity">
    <reaction evidence="1">
        <text>tRNA(Met) + L-methionine + ATP = L-methionyl-tRNA(Met) + AMP + diphosphate</text>
        <dbReference type="Rhea" id="RHEA:13481"/>
        <dbReference type="Rhea" id="RHEA-COMP:9667"/>
        <dbReference type="Rhea" id="RHEA-COMP:9698"/>
        <dbReference type="ChEBI" id="CHEBI:30616"/>
        <dbReference type="ChEBI" id="CHEBI:33019"/>
        <dbReference type="ChEBI" id="CHEBI:57844"/>
        <dbReference type="ChEBI" id="CHEBI:78442"/>
        <dbReference type="ChEBI" id="CHEBI:78530"/>
        <dbReference type="ChEBI" id="CHEBI:456215"/>
        <dbReference type="EC" id="6.1.1.10"/>
    </reaction>
</comment>
<comment type="subunit">
    <text evidence="1">Monomer.</text>
</comment>
<comment type="subcellular location">
    <subcellularLocation>
        <location evidence="1">Cytoplasm</location>
    </subcellularLocation>
</comment>
<comment type="similarity">
    <text evidence="1">Belongs to the class-I aminoacyl-tRNA synthetase family. MetG type 2B subfamily.</text>
</comment>
<comment type="sequence caution" evidence="2">
    <conflict type="erroneous initiation">
        <sequence resource="EMBL-CDS" id="AAL52168"/>
    </conflict>
</comment>
<organism>
    <name type="scientific">Brucella melitensis biotype 1 (strain ATCC 23456 / CCUG 17765 / NCTC 10094 / 16M)</name>
    <dbReference type="NCBI Taxonomy" id="224914"/>
    <lineage>
        <taxon>Bacteria</taxon>
        <taxon>Pseudomonadati</taxon>
        <taxon>Pseudomonadota</taxon>
        <taxon>Alphaproteobacteria</taxon>
        <taxon>Hyphomicrobiales</taxon>
        <taxon>Brucellaceae</taxon>
        <taxon>Brucella/Ochrobactrum group</taxon>
        <taxon>Brucella</taxon>
    </lineage>
</organism>
<gene>
    <name evidence="1" type="primary">metG</name>
    <name type="ordered locus">BMEI0987</name>
</gene>
<evidence type="ECO:0000255" key="1">
    <source>
        <dbReference type="HAMAP-Rule" id="MF_01228"/>
    </source>
</evidence>
<evidence type="ECO:0000305" key="2"/>
<feature type="chain" id="PRO_0000139212" description="Methionine--tRNA ligase">
    <location>
        <begin position="1"/>
        <end position="515"/>
    </location>
</feature>
<feature type="short sequence motif" description="'HIGH' region">
    <location>
        <begin position="13"/>
        <end position="23"/>
    </location>
</feature>
<feature type="short sequence motif" description="'KMSKS' region">
    <location>
        <begin position="300"/>
        <end position="304"/>
    </location>
</feature>
<feature type="binding site" evidence="1">
    <location>
        <position position="303"/>
    </location>
    <ligand>
        <name>ATP</name>
        <dbReference type="ChEBI" id="CHEBI:30616"/>
    </ligand>
</feature>
<accession>Q8YH17</accession>